<reference key="1">
    <citation type="submission" date="2012-12" db="EMBL/GenBank/DDBJ databases">
        <title>Complete sequence of Thioalkalivibrio nitratireducens.</title>
        <authorList>
            <person name="Tikhonova T.V."/>
            <person name="Pavlov A.R."/>
            <person name="Beletsky A.V."/>
            <person name="Mardanov A.V."/>
            <person name="Sorokin D.Y."/>
            <person name="Ravin N.V."/>
            <person name="Popov V.O."/>
        </authorList>
    </citation>
    <scope>NUCLEOTIDE SEQUENCE [LARGE SCALE GENOMIC DNA]</scope>
    <source>
        <strain>DSM 14787 / UNIQEM 213 / ALEN2</strain>
    </source>
</reference>
<reference key="2">
    <citation type="journal article" date="2017" name="Nat. Chem. Biol.">
        <title>Parallel evolution of non-homologous isofunctional enzymes in methionine biosynthesis.</title>
        <authorList>
            <person name="Bastard K."/>
            <person name="Perret A."/>
            <person name="Mariage A."/>
            <person name="Bessonnet T."/>
            <person name="Pinet-Turpault A."/>
            <person name="Petit J.L."/>
            <person name="Darii E."/>
            <person name="Bazire P."/>
            <person name="Vergne-Vaxelaire C."/>
            <person name="Brewee C."/>
            <person name="Debard A."/>
            <person name="Pellouin V."/>
            <person name="Besnard-Gonnet M."/>
            <person name="Artiguenave F."/>
            <person name="Medigue C."/>
            <person name="Vallenet D."/>
            <person name="Danchin A."/>
            <person name="Zaparucha A."/>
            <person name="Weissenbach J."/>
            <person name="Salanoubat M."/>
            <person name="de Berardinis V."/>
        </authorList>
    </citation>
    <scope>FUNCTION</scope>
    <scope>CATALYTIC ACTIVITY</scope>
</reference>
<gene>
    <name evidence="1 3" type="primary">metAS</name>
    <name evidence="4" type="synonym">metA [H]</name>
    <name evidence="4" type="ordered locus">TVNIR_3633</name>
</gene>
<sequence>MPLVAHSNLPTFERLRKEGGTVLPNDYALHQDIRALHIGLLNMMPDAALAATERQFFRLVGESNQIAQFYMHPFTLAELPRGPGGQAHVERYYETFDTIQREGLDALIITGANVSQPDLALEPFWEPLAEVVEWAWKNVTSTLCSCLTTHAVMQSRYGERRRHRGAKLWGVFDHRVVDRTHPLVAGVNTRFDVPHSRFNDVSREQFDRHRLKVLVESERAGVHLAVSEDGFRLVFFQGHPEYDSISLLKEYKREVLRFVNGEREEFPPLPERYLSPQAAAILEEHRERVEQARQRRVPAPELPEPLLVGRLDNTWHDSALAVVNNWIGNVYQFTNHDRRIPFRPGVDPNAPLNWSR</sequence>
<protein>
    <recommendedName>
        <fullName evidence="1">Homoserine O-succinyltransferase</fullName>
        <shortName evidence="1 3">HST</shortName>
        <ecNumber evidence="1 2">2.3.1.46</ecNumber>
    </recommendedName>
    <alternativeName>
        <fullName evidence="1">Homoserine transsuccinylase</fullName>
        <shortName evidence="1">HTS</shortName>
    </alternativeName>
</protein>
<accession>L0E1U3</accession>
<keyword id="KW-0012">Acyltransferase</keyword>
<keyword id="KW-0028">Amino-acid biosynthesis</keyword>
<keyword id="KW-0963">Cytoplasm</keyword>
<keyword id="KW-0486">Methionine biosynthesis</keyword>
<keyword id="KW-0808">Transferase</keyword>
<name>METAS_THIND</name>
<organism>
    <name type="scientific">Thioalkalivibrio nitratireducens (strain DSM 14787 / UNIQEM 213 / ALEN2)</name>
    <dbReference type="NCBI Taxonomy" id="1255043"/>
    <lineage>
        <taxon>Bacteria</taxon>
        <taxon>Pseudomonadati</taxon>
        <taxon>Pseudomonadota</taxon>
        <taxon>Gammaproteobacteria</taxon>
        <taxon>Chromatiales</taxon>
        <taxon>Ectothiorhodospiraceae</taxon>
        <taxon>Thioalkalivibrio</taxon>
    </lineage>
</organism>
<comment type="function">
    <text evidence="1 2">Transfers a succinyl group from succinyl-CoA to L-homoserine, forming succinyl-L-homoserine.</text>
</comment>
<comment type="catalytic activity">
    <reaction evidence="1 2">
        <text>L-homoserine + succinyl-CoA = O-succinyl-L-homoserine + CoA</text>
        <dbReference type="Rhea" id="RHEA:22008"/>
        <dbReference type="ChEBI" id="CHEBI:57287"/>
        <dbReference type="ChEBI" id="CHEBI:57292"/>
        <dbReference type="ChEBI" id="CHEBI:57476"/>
        <dbReference type="ChEBI" id="CHEBI:57661"/>
        <dbReference type="EC" id="2.3.1.46"/>
    </reaction>
</comment>
<comment type="pathway">
    <text evidence="1">Amino-acid biosynthesis; L-methionine biosynthesis via de novo pathway; O-succinyl-L-homoserine from L-homoserine: step 1/1.</text>
</comment>
<comment type="subcellular location">
    <subcellularLocation>
        <location evidence="1">Cytoplasm</location>
    </subcellularLocation>
</comment>
<comment type="similarity">
    <text evidence="1">Belongs to the MetA family.</text>
</comment>
<proteinExistence type="evidence at protein level"/>
<feature type="chain" id="PRO_0000440360" description="Homoserine O-succinyltransferase">
    <location>
        <begin position="1"/>
        <end position="356"/>
    </location>
</feature>
<feature type="active site" description="Acyl-thioester intermediate" evidence="1">
    <location>
        <position position="146"/>
    </location>
</feature>
<feature type="active site" description="Proton acceptor" evidence="1">
    <location>
        <position position="239"/>
    </location>
</feature>
<feature type="active site" evidence="1">
    <location>
        <position position="241"/>
    </location>
</feature>
<feature type="binding site" evidence="1">
    <location>
        <position position="167"/>
    </location>
    <ligand>
        <name>substrate</name>
    </ligand>
</feature>
<feature type="binding site" evidence="1">
    <location>
        <position position="196"/>
    </location>
    <ligand>
        <name>substrate</name>
    </ligand>
</feature>
<feature type="binding site" evidence="1">
    <location>
        <position position="253"/>
    </location>
    <ligand>
        <name>substrate</name>
    </ligand>
</feature>
<feature type="site" description="Important for acyl-CoA specificity" evidence="1">
    <location>
        <position position="113"/>
    </location>
</feature>
<feature type="site" description="Important for acyl-CoA specificity" evidence="1">
    <location>
        <position position="147"/>
    </location>
</feature>
<feature type="site" description="Important for substrate specificity" evidence="1">
    <location>
        <position position="196"/>
    </location>
</feature>
<dbReference type="EC" id="2.3.1.46" evidence="1 2"/>
<dbReference type="EMBL" id="CP003989">
    <property type="protein sequence ID" value="AGA35263.1"/>
    <property type="molecule type" value="Genomic_DNA"/>
</dbReference>
<dbReference type="RefSeq" id="WP_015260356.1">
    <property type="nucleotide sequence ID" value="NC_019902.2"/>
</dbReference>
<dbReference type="SMR" id="L0E1U3"/>
<dbReference type="STRING" id="1255043.TVNIR_3633"/>
<dbReference type="KEGG" id="tni:TVNIR_3633"/>
<dbReference type="PATRIC" id="fig|1255043.3.peg.3665"/>
<dbReference type="eggNOG" id="COG1897">
    <property type="taxonomic scope" value="Bacteria"/>
</dbReference>
<dbReference type="HOGENOM" id="CLU_057851_0_1_6"/>
<dbReference type="OrthoDB" id="9772423at2"/>
<dbReference type="UniPathway" id="UPA00051">
    <property type="reaction ID" value="UER00075"/>
</dbReference>
<dbReference type="Proteomes" id="UP000010809">
    <property type="component" value="Chromosome"/>
</dbReference>
<dbReference type="GO" id="GO:0005737">
    <property type="term" value="C:cytoplasm"/>
    <property type="evidence" value="ECO:0007669"/>
    <property type="project" value="UniProtKB-SubCell"/>
</dbReference>
<dbReference type="GO" id="GO:0004414">
    <property type="term" value="F:homoserine O-acetyltransferase activity"/>
    <property type="evidence" value="ECO:0007669"/>
    <property type="project" value="UniProtKB-UniRule"/>
</dbReference>
<dbReference type="GO" id="GO:0008899">
    <property type="term" value="F:homoserine O-succinyltransferase activity"/>
    <property type="evidence" value="ECO:0007669"/>
    <property type="project" value="UniProtKB-EC"/>
</dbReference>
<dbReference type="GO" id="GO:0009086">
    <property type="term" value="P:methionine biosynthetic process"/>
    <property type="evidence" value="ECO:0007669"/>
    <property type="project" value="UniProtKB-UniRule"/>
</dbReference>
<dbReference type="CDD" id="cd03131">
    <property type="entry name" value="GATase1_HTS"/>
    <property type="match status" value="1"/>
</dbReference>
<dbReference type="Gene3D" id="3.40.50.880">
    <property type="match status" value="1"/>
</dbReference>
<dbReference type="HAMAP" id="MF_00295">
    <property type="entry name" value="MetA_acyltransf"/>
    <property type="match status" value="1"/>
</dbReference>
<dbReference type="InterPro" id="IPR029062">
    <property type="entry name" value="Class_I_gatase-like"/>
</dbReference>
<dbReference type="InterPro" id="IPR033752">
    <property type="entry name" value="MetA_family"/>
</dbReference>
<dbReference type="NCBIfam" id="NF003776">
    <property type="entry name" value="PRK05368.1-3"/>
    <property type="match status" value="1"/>
</dbReference>
<dbReference type="PANTHER" id="PTHR20919">
    <property type="entry name" value="HOMOSERINE O-SUCCINYLTRANSFERASE"/>
    <property type="match status" value="1"/>
</dbReference>
<dbReference type="PANTHER" id="PTHR20919:SF0">
    <property type="entry name" value="HOMOSERINE O-SUCCINYLTRANSFERASE"/>
    <property type="match status" value="1"/>
</dbReference>
<dbReference type="Pfam" id="PF04204">
    <property type="entry name" value="HTS"/>
    <property type="match status" value="1"/>
</dbReference>
<dbReference type="PIRSF" id="PIRSF000450">
    <property type="entry name" value="H_ser_succinyltr"/>
    <property type="match status" value="1"/>
</dbReference>
<dbReference type="SUPFAM" id="SSF52317">
    <property type="entry name" value="Class I glutamine amidotransferase-like"/>
    <property type="match status" value="1"/>
</dbReference>
<evidence type="ECO:0000255" key="1">
    <source>
        <dbReference type="HAMAP-Rule" id="MF_00295"/>
    </source>
</evidence>
<evidence type="ECO:0000269" key="2">
    <source>
    </source>
</evidence>
<evidence type="ECO:0000303" key="3">
    <source>
    </source>
</evidence>
<evidence type="ECO:0000312" key="4">
    <source>
        <dbReference type="EMBL" id="AGA35263.1"/>
    </source>
</evidence>